<accession>P0A419</accession>
<accession>O69195</accession>
<organism>
    <name type="scientific">Synechococcus sp. (strain WH8103)</name>
    <dbReference type="NCBI Taxonomy" id="29410"/>
    <lineage>
        <taxon>Bacteria</taxon>
        <taxon>Bacillati</taxon>
        <taxon>Cyanobacteriota</taxon>
        <taxon>Cyanophyceae</taxon>
        <taxon>Synechococcales</taxon>
        <taxon>Synechococcaceae</taxon>
        <taxon>Synechococcus</taxon>
    </lineage>
</organism>
<sequence length="81" mass="8842">MSHAVKIYDTCIGCTQCVRACPLDVLEMVPWDGCKAGQIASSPRTEDCVGCKRCETACPTDFLSIRVYLGDETTRSMGLAY</sequence>
<proteinExistence type="inferred from homology"/>
<comment type="function">
    <text evidence="2">Apoprotein for the two 4Fe-4S centers FA and FB of photosystem I (PSI); essential for photochemical activity. FB is the terminal electron acceptor of PSI, donating electrons to ferredoxin. The C-terminus interacts with PsaA/B/D and helps assemble the protein into the PSI complex. Required for binding of PsaD and PsaE to PSI. PSI is a plastocyanin/cytochrome c6-ferredoxin oxidoreductase, converting photonic excitation into a charge separation, which transfers an electron from the donor P700 chlorophyll pair to the spectroscopically characterized acceptors A0, A1, FX, FA and FB in turn.</text>
</comment>
<comment type="catalytic activity">
    <reaction evidence="2">
        <text>reduced [plastocyanin] + hnu + oxidized [2Fe-2S]-[ferredoxin] = oxidized [plastocyanin] + reduced [2Fe-2S]-[ferredoxin]</text>
        <dbReference type="Rhea" id="RHEA:30407"/>
        <dbReference type="Rhea" id="RHEA-COMP:10000"/>
        <dbReference type="Rhea" id="RHEA-COMP:10001"/>
        <dbReference type="Rhea" id="RHEA-COMP:10039"/>
        <dbReference type="Rhea" id="RHEA-COMP:10040"/>
        <dbReference type="ChEBI" id="CHEBI:29036"/>
        <dbReference type="ChEBI" id="CHEBI:30212"/>
        <dbReference type="ChEBI" id="CHEBI:33737"/>
        <dbReference type="ChEBI" id="CHEBI:33738"/>
        <dbReference type="ChEBI" id="CHEBI:49552"/>
        <dbReference type="EC" id="1.97.1.12"/>
    </reaction>
</comment>
<comment type="cofactor">
    <cofactor evidence="2">
        <name>[4Fe-4S] cluster</name>
        <dbReference type="ChEBI" id="CHEBI:49883"/>
    </cofactor>
    <text evidence="2">Binds 2 [4Fe-4S] clusters. Cluster 2 is most probably the spectroscopically characterized electron acceptor FA and cluster 1 is most probably FB.</text>
</comment>
<comment type="subunit">
    <text evidence="2">The cyanobacterial PSI reaction center is composed of one copy each of PsaA,B,C,D,E,F,I,J,K,L,M and X, and forms trimeric complexes.</text>
</comment>
<comment type="subcellular location">
    <subcellularLocation>
        <location evidence="2">Cellular thylakoid membrane</location>
        <topology evidence="2">Peripheral membrane protein</topology>
        <orientation evidence="2">Cytoplasmic side</orientation>
    </subcellularLocation>
</comment>
<gene>
    <name evidence="2" type="primary">psaC</name>
</gene>
<name>PSAC_SYNPZ</name>
<reference key="1">
    <citation type="submission" date="1998-05" db="EMBL/GenBank/DDBJ databases">
        <title>Isolation and characterization of the psaC Gene from the marine cyanobacterium, Synechococcus sp. strain WH8103.</title>
        <authorList>
            <person name="Petrie K."/>
            <person name="Hodgson S."/>
            <person name="Wyman M."/>
        </authorList>
    </citation>
    <scope>NUCLEOTIDE SEQUENCE [GENOMIC DNA]</scope>
</reference>
<feature type="initiator methionine" description="Removed" evidence="1">
    <location>
        <position position="1"/>
    </location>
</feature>
<feature type="chain" id="PRO_0000062024" description="Photosystem I iron-sulfur center">
    <location>
        <begin position="2"/>
        <end position="81"/>
    </location>
</feature>
<feature type="domain" description="4Fe-4S ferredoxin-type 1" evidence="2">
    <location>
        <begin position="2"/>
        <end position="31"/>
    </location>
</feature>
<feature type="domain" description="4Fe-4S ferredoxin-type 2" evidence="2">
    <location>
        <begin position="37"/>
        <end position="68"/>
    </location>
</feature>
<feature type="binding site" evidence="2">
    <location>
        <position position="11"/>
    </location>
    <ligand>
        <name>[4Fe-4S] cluster</name>
        <dbReference type="ChEBI" id="CHEBI:49883"/>
        <label>1</label>
    </ligand>
</feature>
<feature type="binding site" evidence="2">
    <location>
        <position position="14"/>
    </location>
    <ligand>
        <name>[4Fe-4S] cluster</name>
        <dbReference type="ChEBI" id="CHEBI:49883"/>
        <label>1</label>
    </ligand>
</feature>
<feature type="binding site" evidence="2">
    <location>
        <position position="17"/>
    </location>
    <ligand>
        <name>[4Fe-4S] cluster</name>
        <dbReference type="ChEBI" id="CHEBI:49883"/>
        <label>1</label>
    </ligand>
</feature>
<feature type="binding site" evidence="2">
    <location>
        <position position="21"/>
    </location>
    <ligand>
        <name>[4Fe-4S] cluster</name>
        <dbReference type="ChEBI" id="CHEBI:49883"/>
        <label>2</label>
    </ligand>
</feature>
<feature type="binding site" evidence="2">
    <location>
        <position position="48"/>
    </location>
    <ligand>
        <name>[4Fe-4S] cluster</name>
        <dbReference type="ChEBI" id="CHEBI:49883"/>
        <label>2</label>
    </ligand>
</feature>
<feature type="binding site" evidence="2">
    <location>
        <position position="51"/>
    </location>
    <ligand>
        <name>[4Fe-4S] cluster</name>
        <dbReference type="ChEBI" id="CHEBI:49883"/>
        <label>2</label>
    </ligand>
</feature>
<feature type="binding site" evidence="2">
    <location>
        <position position="54"/>
    </location>
    <ligand>
        <name>[4Fe-4S] cluster</name>
        <dbReference type="ChEBI" id="CHEBI:49883"/>
        <label>2</label>
    </ligand>
</feature>
<feature type="binding site" evidence="2">
    <location>
        <position position="58"/>
    </location>
    <ligand>
        <name>[4Fe-4S] cluster</name>
        <dbReference type="ChEBI" id="CHEBI:49883"/>
        <label>1</label>
    </ligand>
</feature>
<evidence type="ECO:0000250" key="1"/>
<evidence type="ECO:0000255" key="2">
    <source>
        <dbReference type="HAMAP-Rule" id="MF_01303"/>
    </source>
</evidence>
<keyword id="KW-0004">4Fe-4S</keyword>
<keyword id="KW-0249">Electron transport</keyword>
<keyword id="KW-0408">Iron</keyword>
<keyword id="KW-0411">Iron-sulfur</keyword>
<keyword id="KW-0472">Membrane</keyword>
<keyword id="KW-0479">Metal-binding</keyword>
<keyword id="KW-0560">Oxidoreductase</keyword>
<keyword id="KW-0602">Photosynthesis</keyword>
<keyword id="KW-0603">Photosystem I</keyword>
<keyword id="KW-0677">Repeat</keyword>
<keyword id="KW-0793">Thylakoid</keyword>
<keyword id="KW-0813">Transport</keyword>
<dbReference type="EC" id="1.97.1.12" evidence="2"/>
<dbReference type="EMBL" id="AF067734">
    <property type="protein sequence ID" value="AAC18397.1"/>
    <property type="molecule type" value="Genomic_DNA"/>
</dbReference>
<dbReference type="SMR" id="P0A419"/>
<dbReference type="KEGG" id="synw:SynWH8103_00161"/>
<dbReference type="OrthoDB" id="9804603at2"/>
<dbReference type="GO" id="GO:0009522">
    <property type="term" value="C:photosystem I"/>
    <property type="evidence" value="ECO:0007669"/>
    <property type="project" value="UniProtKB-KW"/>
</dbReference>
<dbReference type="GO" id="GO:0031676">
    <property type="term" value="C:plasma membrane-derived thylakoid membrane"/>
    <property type="evidence" value="ECO:0007669"/>
    <property type="project" value="UniProtKB-SubCell"/>
</dbReference>
<dbReference type="GO" id="GO:0051539">
    <property type="term" value="F:4 iron, 4 sulfur cluster binding"/>
    <property type="evidence" value="ECO:0007669"/>
    <property type="project" value="UniProtKB-KW"/>
</dbReference>
<dbReference type="GO" id="GO:0009055">
    <property type="term" value="F:electron transfer activity"/>
    <property type="evidence" value="ECO:0007669"/>
    <property type="project" value="UniProtKB-UniRule"/>
</dbReference>
<dbReference type="GO" id="GO:0046872">
    <property type="term" value="F:metal ion binding"/>
    <property type="evidence" value="ECO:0007669"/>
    <property type="project" value="UniProtKB-KW"/>
</dbReference>
<dbReference type="GO" id="GO:0016491">
    <property type="term" value="F:oxidoreductase activity"/>
    <property type="evidence" value="ECO:0007669"/>
    <property type="project" value="UniProtKB-KW"/>
</dbReference>
<dbReference type="GO" id="GO:0009773">
    <property type="term" value="P:photosynthetic electron transport in photosystem I"/>
    <property type="evidence" value="ECO:0007669"/>
    <property type="project" value="InterPro"/>
</dbReference>
<dbReference type="FunFam" id="3.30.70.20:FF:000001">
    <property type="entry name" value="Photosystem I iron-sulfur center"/>
    <property type="match status" value="1"/>
</dbReference>
<dbReference type="Gene3D" id="3.30.70.20">
    <property type="match status" value="1"/>
</dbReference>
<dbReference type="HAMAP" id="MF_01303">
    <property type="entry name" value="PSI_PsaC"/>
    <property type="match status" value="1"/>
</dbReference>
<dbReference type="InterPro" id="IPR017896">
    <property type="entry name" value="4Fe4S_Fe-S-bd"/>
</dbReference>
<dbReference type="InterPro" id="IPR017900">
    <property type="entry name" value="4Fe4S_Fe_S_CS"/>
</dbReference>
<dbReference type="InterPro" id="IPR050157">
    <property type="entry name" value="PSI_iron-sulfur_center"/>
</dbReference>
<dbReference type="InterPro" id="IPR017491">
    <property type="entry name" value="PSI_PsaC"/>
</dbReference>
<dbReference type="NCBIfam" id="TIGR03048">
    <property type="entry name" value="PS_I_psaC"/>
    <property type="match status" value="1"/>
</dbReference>
<dbReference type="PANTHER" id="PTHR24960:SF79">
    <property type="entry name" value="PHOTOSYSTEM I IRON-SULFUR CENTER"/>
    <property type="match status" value="1"/>
</dbReference>
<dbReference type="PANTHER" id="PTHR24960">
    <property type="entry name" value="PHOTOSYSTEM I IRON-SULFUR CENTER-RELATED"/>
    <property type="match status" value="1"/>
</dbReference>
<dbReference type="Pfam" id="PF12838">
    <property type="entry name" value="Fer4_7"/>
    <property type="match status" value="1"/>
</dbReference>
<dbReference type="SUPFAM" id="SSF54862">
    <property type="entry name" value="4Fe-4S ferredoxins"/>
    <property type="match status" value="1"/>
</dbReference>
<dbReference type="PROSITE" id="PS00198">
    <property type="entry name" value="4FE4S_FER_1"/>
    <property type="match status" value="2"/>
</dbReference>
<dbReference type="PROSITE" id="PS51379">
    <property type="entry name" value="4FE4S_FER_2"/>
    <property type="match status" value="2"/>
</dbReference>
<protein>
    <recommendedName>
        <fullName evidence="2">Photosystem I iron-sulfur center</fullName>
        <ecNumber evidence="2">1.97.1.12</ecNumber>
    </recommendedName>
    <alternativeName>
        <fullName evidence="2">9 kDa polypeptide</fullName>
    </alternativeName>
    <alternativeName>
        <fullName evidence="2">PSI-C</fullName>
    </alternativeName>
    <alternativeName>
        <fullName evidence="2">Photosystem I subunit VII</fullName>
    </alternativeName>
    <alternativeName>
        <fullName evidence="2">PsaC</fullName>
    </alternativeName>
</protein>